<proteinExistence type="inferred from homology"/>
<comment type="similarity">
    <text evidence="1">Belongs to the bacterial ribosomal protein bL33 family.</text>
</comment>
<keyword id="KW-1185">Reference proteome</keyword>
<keyword id="KW-0687">Ribonucleoprotein</keyword>
<keyword id="KW-0689">Ribosomal protein</keyword>
<feature type="chain" id="PRO_0000356515" description="Large ribosomal subunit protein bL33B">
    <location>
        <begin position="1"/>
        <end position="50"/>
    </location>
</feature>
<dbReference type="EMBL" id="CP000233">
    <property type="protein sequence ID" value="ABE00050.1"/>
    <property type="molecule type" value="Genomic_DNA"/>
</dbReference>
<dbReference type="RefSeq" id="YP_536133.1">
    <property type="nucleotide sequence ID" value="NC_007929.1"/>
</dbReference>
<dbReference type="SMR" id="Q1WSS9"/>
<dbReference type="STRING" id="362948.LSL_1243"/>
<dbReference type="KEGG" id="lsl:LSL_1243"/>
<dbReference type="PATRIC" id="fig|362948.14.peg.1317"/>
<dbReference type="HOGENOM" id="CLU_190949_0_1_9"/>
<dbReference type="OrthoDB" id="9801333at2"/>
<dbReference type="Proteomes" id="UP000006559">
    <property type="component" value="Chromosome"/>
</dbReference>
<dbReference type="GO" id="GO:0005737">
    <property type="term" value="C:cytoplasm"/>
    <property type="evidence" value="ECO:0007669"/>
    <property type="project" value="UniProtKB-ARBA"/>
</dbReference>
<dbReference type="GO" id="GO:1990904">
    <property type="term" value="C:ribonucleoprotein complex"/>
    <property type="evidence" value="ECO:0007669"/>
    <property type="project" value="UniProtKB-KW"/>
</dbReference>
<dbReference type="GO" id="GO:0005840">
    <property type="term" value="C:ribosome"/>
    <property type="evidence" value="ECO:0007669"/>
    <property type="project" value="UniProtKB-KW"/>
</dbReference>
<dbReference type="GO" id="GO:0003735">
    <property type="term" value="F:structural constituent of ribosome"/>
    <property type="evidence" value="ECO:0007669"/>
    <property type="project" value="InterPro"/>
</dbReference>
<dbReference type="GO" id="GO:0006412">
    <property type="term" value="P:translation"/>
    <property type="evidence" value="ECO:0007669"/>
    <property type="project" value="UniProtKB-UniRule"/>
</dbReference>
<dbReference type="Gene3D" id="2.20.28.120">
    <property type="entry name" value="Ribosomal protein L33"/>
    <property type="match status" value="1"/>
</dbReference>
<dbReference type="HAMAP" id="MF_00294">
    <property type="entry name" value="Ribosomal_bL33"/>
    <property type="match status" value="1"/>
</dbReference>
<dbReference type="InterPro" id="IPR001705">
    <property type="entry name" value="Ribosomal_bL33"/>
</dbReference>
<dbReference type="InterPro" id="IPR038584">
    <property type="entry name" value="Ribosomal_bL33_sf"/>
</dbReference>
<dbReference type="InterPro" id="IPR011332">
    <property type="entry name" value="Ribosomal_zn-bd"/>
</dbReference>
<dbReference type="NCBIfam" id="NF001764">
    <property type="entry name" value="PRK00504.1"/>
    <property type="match status" value="1"/>
</dbReference>
<dbReference type="NCBIfam" id="NF001860">
    <property type="entry name" value="PRK00595.1"/>
    <property type="match status" value="1"/>
</dbReference>
<dbReference type="NCBIfam" id="TIGR01023">
    <property type="entry name" value="rpmG_bact"/>
    <property type="match status" value="1"/>
</dbReference>
<dbReference type="PANTHER" id="PTHR43168">
    <property type="entry name" value="50S RIBOSOMAL PROTEIN L33, CHLOROPLASTIC"/>
    <property type="match status" value="1"/>
</dbReference>
<dbReference type="PANTHER" id="PTHR43168:SF5">
    <property type="entry name" value="LARGE RIBOSOMAL SUBUNIT PROTEIN BL33B"/>
    <property type="match status" value="1"/>
</dbReference>
<dbReference type="Pfam" id="PF00471">
    <property type="entry name" value="Ribosomal_L33"/>
    <property type="match status" value="1"/>
</dbReference>
<dbReference type="SUPFAM" id="SSF57829">
    <property type="entry name" value="Zn-binding ribosomal proteins"/>
    <property type="match status" value="1"/>
</dbReference>
<reference key="1">
    <citation type="journal article" date="2006" name="Proc. Natl. Acad. Sci. U.S.A.">
        <title>Multireplicon genome architecture of Lactobacillus salivarius.</title>
        <authorList>
            <person name="Claesson M.J."/>
            <person name="Li Y."/>
            <person name="Leahy S."/>
            <person name="Canchaya C."/>
            <person name="van Pijkeren J.P."/>
            <person name="Cerdeno-Tarraga A.M."/>
            <person name="Parkhill J."/>
            <person name="Flynn S."/>
            <person name="O'Sullivan G.C."/>
            <person name="Collins J.K."/>
            <person name="Higgins D."/>
            <person name="Shanahan F."/>
            <person name="Fitzgerald G.F."/>
            <person name="van Sinderen D."/>
            <person name="O'Toole P.W."/>
        </authorList>
    </citation>
    <scope>NUCLEOTIDE SEQUENCE [LARGE SCALE GENOMIC DNA]</scope>
    <source>
        <strain>UCC118</strain>
    </source>
</reference>
<sequence>MANKKKVALACSECGSRNYTITENPNRTERLEVQKFCKYCGKHTLHRETK</sequence>
<evidence type="ECO:0000255" key="1">
    <source>
        <dbReference type="HAMAP-Rule" id="MF_00294"/>
    </source>
</evidence>
<gene>
    <name evidence="1" type="primary">rpmG2</name>
    <name type="ordered locus">LSL_1243</name>
</gene>
<name>RL332_LIGS1</name>
<protein>
    <recommendedName>
        <fullName evidence="1">Large ribosomal subunit protein bL33B</fullName>
    </recommendedName>
    <alternativeName>
        <fullName evidence="1">50S ribosomal protein L33 2</fullName>
    </alternativeName>
</protein>
<accession>Q1WSS9</accession>
<organism>
    <name type="scientific">Ligilactobacillus salivarius (strain UCC118)</name>
    <name type="common">Lactobacillus salivarius</name>
    <dbReference type="NCBI Taxonomy" id="362948"/>
    <lineage>
        <taxon>Bacteria</taxon>
        <taxon>Bacillati</taxon>
        <taxon>Bacillota</taxon>
        <taxon>Bacilli</taxon>
        <taxon>Lactobacillales</taxon>
        <taxon>Lactobacillaceae</taxon>
        <taxon>Ligilactobacillus</taxon>
    </lineage>
</organism>